<proteinExistence type="inferred from homology"/>
<protein>
    <recommendedName>
        <fullName evidence="1">Threonine--tRNA ligase</fullName>
        <ecNumber evidence="1">6.1.1.3</ecNumber>
    </recommendedName>
    <alternativeName>
        <fullName evidence="1">Threonyl-tRNA synthetase</fullName>
        <shortName evidence="1">ThrRS</shortName>
    </alternativeName>
</protein>
<reference key="1">
    <citation type="journal article" date="2000" name="Nature">
        <title>Genome sequence of the endocellular bacterial symbiont of aphids Buchnera sp. APS.</title>
        <authorList>
            <person name="Shigenobu S."/>
            <person name="Watanabe H."/>
            <person name="Hattori M."/>
            <person name="Sakaki Y."/>
            <person name="Ishikawa H."/>
        </authorList>
    </citation>
    <scope>NUCLEOTIDE SEQUENCE [LARGE SCALE GENOMIC DNA]</scope>
    <source>
        <strain>APS</strain>
    </source>
</reference>
<name>SYT_BUCAI</name>
<comment type="function">
    <text evidence="1">Catalyzes the attachment of threonine to tRNA(Thr) in a two-step reaction: L-threonine is first activated by ATP to form Thr-AMP and then transferred to the acceptor end of tRNA(Thr). Also edits incorrectly charged L-seryl-tRNA(Thr).</text>
</comment>
<comment type="catalytic activity">
    <reaction evidence="1">
        <text>tRNA(Thr) + L-threonine + ATP = L-threonyl-tRNA(Thr) + AMP + diphosphate + H(+)</text>
        <dbReference type="Rhea" id="RHEA:24624"/>
        <dbReference type="Rhea" id="RHEA-COMP:9670"/>
        <dbReference type="Rhea" id="RHEA-COMP:9704"/>
        <dbReference type="ChEBI" id="CHEBI:15378"/>
        <dbReference type="ChEBI" id="CHEBI:30616"/>
        <dbReference type="ChEBI" id="CHEBI:33019"/>
        <dbReference type="ChEBI" id="CHEBI:57926"/>
        <dbReference type="ChEBI" id="CHEBI:78442"/>
        <dbReference type="ChEBI" id="CHEBI:78534"/>
        <dbReference type="ChEBI" id="CHEBI:456215"/>
        <dbReference type="EC" id="6.1.1.3"/>
    </reaction>
</comment>
<comment type="cofactor">
    <cofactor evidence="1">
        <name>Zn(2+)</name>
        <dbReference type="ChEBI" id="CHEBI:29105"/>
    </cofactor>
    <text evidence="1">Binds 1 zinc ion per subunit.</text>
</comment>
<comment type="subunit">
    <text evidence="1">Homodimer.</text>
</comment>
<comment type="subcellular location">
    <subcellularLocation>
        <location evidence="1">Cytoplasm</location>
    </subcellularLocation>
</comment>
<comment type="similarity">
    <text evidence="1">Belongs to the class-II aminoacyl-tRNA synthetase family.</text>
</comment>
<evidence type="ECO:0000255" key="1">
    <source>
        <dbReference type="HAMAP-Rule" id="MF_00184"/>
    </source>
</evidence>
<evidence type="ECO:0000255" key="2">
    <source>
        <dbReference type="PROSITE-ProRule" id="PRU01228"/>
    </source>
</evidence>
<dbReference type="EC" id="6.1.1.3" evidence="1"/>
<dbReference type="EMBL" id="BA000003">
    <property type="protein sequence ID" value="BAB12843.1"/>
    <property type="molecule type" value="Genomic_DNA"/>
</dbReference>
<dbReference type="RefSeq" id="NP_239957.1">
    <property type="nucleotide sequence ID" value="NC_002528.1"/>
</dbReference>
<dbReference type="RefSeq" id="WP_010895960.1">
    <property type="nucleotide sequence ID" value="NC_002528.1"/>
</dbReference>
<dbReference type="SMR" id="P57225"/>
<dbReference type="STRING" id="563178.BUAP5A_123"/>
<dbReference type="EnsemblBacteria" id="BAB12843">
    <property type="protein sequence ID" value="BAB12843"/>
    <property type="gene ID" value="BAB12843"/>
</dbReference>
<dbReference type="KEGG" id="buc:BU125"/>
<dbReference type="PATRIC" id="fig|107806.10.peg.134"/>
<dbReference type="eggNOG" id="COG0441">
    <property type="taxonomic scope" value="Bacteria"/>
</dbReference>
<dbReference type="HOGENOM" id="CLU_008554_0_1_6"/>
<dbReference type="Proteomes" id="UP000001806">
    <property type="component" value="Chromosome"/>
</dbReference>
<dbReference type="GO" id="GO:0005829">
    <property type="term" value="C:cytosol"/>
    <property type="evidence" value="ECO:0007669"/>
    <property type="project" value="TreeGrafter"/>
</dbReference>
<dbReference type="GO" id="GO:0005524">
    <property type="term" value="F:ATP binding"/>
    <property type="evidence" value="ECO:0007669"/>
    <property type="project" value="UniProtKB-UniRule"/>
</dbReference>
<dbReference type="GO" id="GO:0046872">
    <property type="term" value="F:metal ion binding"/>
    <property type="evidence" value="ECO:0007669"/>
    <property type="project" value="UniProtKB-KW"/>
</dbReference>
<dbReference type="GO" id="GO:0004829">
    <property type="term" value="F:threonine-tRNA ligase activity"/>
    <property type="evidence" value="ECO:0007669"/>
    <property type="project" value="UniProtKB-UniRule"/>
</dbReference>
<dbReference type="GO" id="GO:0000049">
    <property type="term" value="F:tRNA binding"/>
    <property type="evidence" value="ECO:0007669"/>
    <property type="project" value="UniProtKB-KW"/>
</dbReference>
<dbReference type="GO" id="GO:0006435">
    <property type="term" value="P:threonyl-tRNA aminoacylation"/>
    <property type="evidence" value="ECO:0007669"/>
    <property type="project" value="UniProtKB-UniRule"/>
</dbReference>
<dbReference type="CDD" id="cd01667">
    <property type="entry name" value="TGS_ThrRS"/>
    <property type="match status" value="1"/>
</dbReference>
<dbReference type="CDD" id="cd00860">
    <property type="entry name" value="ThrRS_anticodon"/>
    <property type="match status" value="1"/>
</dbReference>
<dbReference type="CDD" id="cd00771">
    <property type="entry name" value="ThrRS_core"/>
    <property type="match status" value="1"/>
</dbReference>
<dbReference type="FunFam" id="3.30.930.10:FF:000002">
    <property type="entry name" value="Threonine--tRNA ligase"/>
    <property type="match status" value="1"/>
</dbReference>
<dbReference type="FunFam" id="3.40.50.800:FF:000001">
    <property type="entry name" value="Threonine--tRNA ligase"/>
    <property type="match status" value="1"/>
</dbReference>
<dbReference type="Gene3D" id="3.10.20.30">
    <property type="match status" value="1"/>
</dbReference>
<dbReference type="Gene3D" id="3.30.54.20">
    <property type="match status" value="1"/>
</dbReference>
<dbReference type="Gene3D" id="3.40.50.800">
    <property type="entry name" value="Anticodon-binding domain"/>
    <property type="match status" value="1"/>
</dbReference>
<dbReference type="Gene3D" id="3.30.930.10">
    <property type="entry name" value="Bira Bifunctional Protein, Domain 2"/>
    <property type="match status" value="1"/>
</dbReference>
<dbReference type="Gene3D" id="3.30.980.10">
    <property type="entry name" value="Threonyl-trna Synthetase, Chain A, domain 2"/>
    <property type="match status" value="1"/>
</dbReference>
<dbReference type="HAMAP" id="MF_00184">
    <property type="entry name" value="Thr_tRNA_synth"/>
    <property type="match status" value="1"/>
</dbReference>
<dbReference type="InterPro" id="IPR002314">
    <property type="entry name" value="aa-tRNA-synt_IIb"/>
</dbReference>
<dbReference type="InterPro" id="IPR006195">
    <property type="entry name" value="aa-tRNA-synth_II"/>
</dbReference>
<dbReference type="InterPro" id="IPR045864">
    <property type="entry name" value="aa-tRNA-synth_II/BPL/LPL"/>
</dbReference>
<dbReference type="InterPro" id="IPR004154">
    <property type="entry name" value="Anticodon-bd"/>
</dbReference>
<dbReference type="InterPro" id="IPR036621">
    <property type="entry name" value="Anticodon-bd_dom_sf"/>
</dbReference>
<dbReference type="InterPro" id="IPR012675">
    <property type="entry name" value="Beta-grasp_dom_sf"/>
</dbReference>
<dbReference type="InterPro" id="IPR004095">
    <property type="entry name" value="TGS"/>
</dbReference>
<dbReference type="InterPro" id="IPR002320">
    <property type="entry name" value="Thr-tRNA-ligase_IIa"/>
</dbReference>
<dbReference type="InterPro" id="IPR018163">
    <property type="entry name" value="Thr/Ala-tRNA-synth_IIc_edit"/>
</dbReference>
<dbReference type="InterPro" id="IPR047246">
    <property type="entry name" value="ThrRS_anticodon"/>
</dbReference>
<dbReference type="InterPro" id="IPR033728">
    <property type="entry name" value="ThrRS_core"/>
</dbReference>
<dbReference type="InterPro" id="IPR012947">
    <property type="entry name" value="tRNA_SAD"/>
</dbReference>
<dbReference type="NCBIfam" id="TIGR00418">
    <property type="entry name" value="thrS"/>
    <property type="match status" value="1"/>
</dbReference>
<dbReference type="PANTHER" id="PTHR11451:SF44">
    <property type="entry name" value="THREONINE--TRNA LIGASE, CHLOROPLASTIC_MITOCHONDRIAL 2"/>
    <property type="match status" value="1"/>
</dbReference>
<dbReference type="PANTHER" id="PTHR11451">
    <property type="entry name" value="THREONINE-TRNA LIGASE"/>
    <property type="match status" value="1"/>
</dbReference>
<dbReference type="Pfam" id="PF03129">
    <property type="entry name" value="HGTP_anticodon"/>
    <property type="match status" value="1"/>
</dbReference>
<dbReference type="Pfam" id="PF00587">
    <property type="entry name" value="tRNA-synt_2b"/>
    <property type="match status" value="1"/>
</dbReference>
<dbReference type="Pfam" id="PF07973">
    <property type="entry name" value="tRNA_SAD"/>
    <property type="match status" value="1"/>
</dbReference>
<dbReference type="PRINTS" id="PR01047">
    <property type="entry name" value="TRNASYNTHTHR"/>
</dbReference>
<dbReference type="SMART" id="SM00863">
    <property type="entry name" value="tRNA_SAD"/>
    <property type="match status" value="1"/>
</dbReference>
<dbReference type="SUPFAM" id="SSF52954">
    <property type="entry name" value="Class II aaRS ABD-related"/>
    <property type="match status" value="1"/>
</dbReference>
<dbReference type="SUPFAM" id="SSF55681">
    <property type="entry name" value="Class II aaRS and biotin synthetases"/>
    <property type="match status" value="1"/>
</dbReference>
<dbReference type="SUPFAM" id="SSF55186">
    <property type="entry name" value="ThrRS/AlaRS common domain"/>
    <property type="match status" value="1"/>
</dbReference>
<dbReference type="PROSITE" id="PS50862">
    <property type="entry name" value="AA_TRNA_LIGASE_II"/>
    <property type="match status" value="1"/>
</dbReference>
<dbReference type="PROSITE" id="PS51880">
    <property type="entry name" value="TGS"/>
    <property type="match status" value="1"/>
</dbReference>
<feature type="chain" id="PRO_0000100950" description="Threonine--tRNA ligase">
    <location>
        <begin position="1"/>
        <end position="642"/>
    </location>
</feature>
<feature type="domain" description="TGS" evidence="2">
    <location>
        <begin position="1"/>
        <end position="61"/>
    </location>
</feature>
<feature type="region of interest" description="Catalytic" evidence="1">
    <location>
        <begin position="243"/>
        <end position="534"/>
    </location>
</feature>
<feature type="binding site" evidence="1">
    <location>
        <position position="334"/>
    </location>
    <ligand>
        <name>Zn(2+)</name>
        <dbReference type="ChEBI" id="CHEBI:29105"/>
    </ligand>
</feature>
<feature type="binding site" evidence="1">
    <location>
        <position position="385"/>
    </location>
    <ligand>
        <name>Zn(2+)</name>
        <dbReference type="ChEBI" id="CHEBI:29105"/>
    </ligand>
</feature>
<feature type="binding site" evidence="1">
    <location>
        <position position="511"/>
    </location>
    <ligand>
        <name>Zn(2+)</name>
        <dbReference type="ChEBI" id="CHEBI:29105"/>
    </ligand>
</feature>
<gene>
    <name evidence="1" type="primary">thrS</name>
    <name type="ordered locus">BU125</name>
</gene>
<sequence length="642" mass="76110">MPVIRFYDGSQQVYEHSVSLIEIIKNKKPSIMKSLIAISVNNHFSNLNTFIREDAFIEFVDQKNYKALNIIRYSCAQLLSYAIKNIWPLAQIATSNIIEDGFYCDIDFKRSISEKDLILLENQMKMLVKREYNILNKLISYSEAREIFQKCFEKYKVSLIDENINCNSKVSLYYHENYADIDIGLQVFNIKFCKYFKLQKIGGVYWKKNKNNKMLQRIYGTAWTNKQELDKHLDYLNELEKRDHRKIGKFLQLYHMQEESPGMIFWHNKGWIIFNELQNFVRVKLKEYKYEEVKTPLLIDKLIWKQSGHWDNYKNAIFTTLSEHREYCIKPMNCPGHVQIFNSRLKSYRDLPIRMAEFGSCHRNEPSGSLHGLMRVRNFTQDDAHIFCTREQVRSEINDCIKMIYDLYSTFHFKKILVKLSTRPEKRIGTDSLWNESEKDLSDMLIENHLSFEYQSGEGAFYGPKIEFILQDSLDRNWQCGTIQLDFYLPLRLSSFYINEKNEKKVPVIIHRAILGSIERFIGILIEECSGNLPTWLSPVQVVIISITDISSGYVKELFKKFSDVNIRIECDLRNEKIGFKIREHTLRRIPYILICGEKESSSKKISVRNRQGHNFGMIDVDFFIKKLQKEIITRNFYQMEE</sequence>
<keyword id="KW-0030">Aminoacyl-tRNA synthetase</keyword>
<keyword id="KW-0067">ATP-binding</keyword>
<keyword id="KW-0963">Cytoplasm</keyword>
<keyword id="KW-0436">Ligase</keyword>
<keyword id="KW-0479">Metal-binding</keyword>
<keyword id="KW-0547">Nucleotide-binding</keyword>
<keyword id="KW-0648">Protein biosynthesis</keyword>
<keyword id="KW-1185">Reference proteome</keyword>
<keyword id="KW-0694">RNA-binding</keyword>
<keyword id="KW-0820">tRNA-binding</keyword>
<keyword id="KW-0862">Zinc</keyword>
<organism>
    <name type="scientific">Buchnera aphidicola subsp. Acyrthosiphon pisum (strain APS)</name>
    <name type="common">Acyrthosiphon pisum symbiotic bacterium</name>
    <dbReference type="NCBI Taxonomy" id="107806"/>
    <lineage>
        <taxon>Bacteria</taxon>
        <taxon>Pseudomonadati</taxon>
        <taxon>Pseudomonadota</taxon>
        <taxon>Gammaproteobacteria</taxon>
        <taxon>Enterobacterales</taxon>
        <taxon>Erwiniaceae</taxon>
        <taxon>Buchnera</taxon>
    </lineage>
</organism>
<accession>P57225</accession>